<accession>Q650P7</accession>
<dbReference type="EC" id="2.8.4.3" evidence="1"/>
<dbReference type="EMBL" id="AP006841">
    <property type="protein sequence ID" value="BAD46777.1"/>
    <property type="molecule type" value="Genomic_DNA"/>
</dbReference>
<dbReference type="RefSeq" id="WP_005783584.1">
    <property type="nucleotide sequence ID" value="NZ_UYXF01000012.1"/>
</dbReference>
<dbReference type="RefSeq" id="YP_097311.1">
    <property type="nucleotide sequence ID" value="NC_006347.1"/>
</dbReference>
<dbReference type="SMR" id="Q650P7"/>
<dbReference type="STRING" id="295405.BF0028"/>
<dbReference type="GeneID" id="60368234"/>
<dbReference type="KEGG" id="bfr:BF0028"/>
<dbReference type="PATRIC" id="fig|295405.11.peg.69"/>
<dbReference type="HOGENOM" id="CLU_018697_2_0_10"/>
<dbReference type="OrthoDB" id="9805215at2"/>
<dbReference type="Proteomes" id="UP000002197">
    <property type="component" value="Chromosome"/>
</dbReference>
<dbReference type="GO" id="GO:0005829">
    <property type="term" value="C:cytosol"/>
    <property type="evidence" value="ECO:0007669"/>
    <property type="project" value="TreeGrafter"/>
</dbReference>
<dbReference type="GO" id="GO:0051539">
    <property type="term" value="F:4 iron, 4 sulfur cluster binding"/>
    <property type="evidence" value="ECO:0007669"/>
    <property type="project" value="UniProtKB-UniRule"/>
</dbReference>
<dbReference type="GO" id="GO:0046872">
    <property type="term" value="F:metal ion binding"/>
    <property type="evidence" value="ECO:0007669"/>
    <property type="project" value="UniProtKB-KW"/>
</dbReference>
<dbReference type="GO" id="GO:0035597">
    <property type="term" value="F:N6-isopentenyladenosine methylthiotransferase activity"/>
    <property type="evidence" value="ECO:0007669"/>
    <property type="project" value="TreeGrafter"/>
</dbReference>
<dbReference type="CDD" id="cd01335">
    <property type="entry name" value="Radical_SAM"/>
    <property type="match status" value="1"/>
</dbReference>
<dbReference type="FunFam" id="3.40.50.12160:FF:000003">
    <property type="entry name" value="CDK5 regulatory subunit-associated protein 1"/>
    <property type="match status" value="1"/>
</dbReference>
<dbReference type="FunFam" id="3.80.30.20:FF:000005">
    <property type="entry name" value="tRNA-2-methylthio-N(6)-dimethylallyladenosine synthase"/>
    <property type="match status" value="1"/>
</dbReference>
<dbReference type="Gene3D" id="3.40.50.12160">
    <property type="entry name" value="Methylthiotransferase, N-terminal domain"/>
    <property type="match status" value="1"/>
</dbReference>
<dbReference type="Gene3D" id="2.40.50.140">
    <property type="entry name" value="Nucleic acid-binding proteins"/>
    <property type="match status" value="1"/>
</dbReference>
<dbReference type="Gene3D" id="3.80.30.20">
    <property type="entry name" value="tm_1862 like domain"/>
    <property type="match status" value="1"/>
</dbReference>
<dbReference type="HAMAP" id="MF_01864">
    <property type="entry name" value="tRNA_metthiotr_MiaB"/>
    <property type="match status" value="1"/>
</dbReference>
<dbReference type="InterPro" id="IPR006638">
    <property type="entry name" value="Elp3/MiaA/NifB-like_rSAM"/>
</dbReference>
<dbReference type="InterPro" id="IPR005839">
    <property type="entry name" value="Methylthiotransferase"/>
</dbReference>
<dbReference type="InterPro" id="IPR020612">
    <property type="entry name" value="Methylthiotransferase_CS"/>
</dbReference>
<dbReference type="InterPro" id="IPR013848">
    <property type="entry name" value="Methylthiotransferase_N"/>
</dbReference>
<dbReference type="InterPro" id="IPR038135">
    <property type="entry name" value="Methylthiotransferase_N_sf"/>
</dbReference>
<dbReference type="InterPro" id="IPR006463">
    <property type="entry name" value="MiaB_methiolase"/>
</dbReference>
<dbReference type="InterPro" id="IPR012340">
    <property type="entry name" value="NA-bd_OB-fold"/>
</dbReference>
<dbReference type="InterPro" id="IPR007197">
    <property type="entry name" value="rSAM"/>
</dbReference>
<dbReference type="InterPro" id="IPR023404">
    <property type="entry name" value="rSAM_horseshoe"/>
</dbReference>
<dbReference type="InterPro" id="IPR002792">
    <property type="entry name" value="TRAM_dom"/>
</dbReference>
<dbReference type="NCBIfam" id="TIGR01574">
    <property type="entry name" value="miaB-methiolase"/>
    <property type="match status" value="1"/>
</dbReference>
<dbReference type="NCBIfam" id="TIGR00089">
    <property type="entry name" value="MiaB/RimO family radical SAM methylthiotransferase"/>
    <property type="match status" value="1"/>
</dbReference>
<dbReference type="PANTHER" id="PTHR43020">
    <property type="entry name" value="CDK5 REGULATORY SUBUNIT-ASSOCIATED PROTEIN 1"/>
    <property type="match status" value="1"/>
</dbReference>
<dbReference type="PANTHER" id="PTHR43020:SF2">
    <property type="entry name" value="MITOCHONDRIAL TRNA METHYLTHIOTRANSFERASE CDK5RAP1"/>
    <property type="match status" value="1"/>
</dbReference>
<dbReference type="Pfam" id="PF04055">
    <property type="entry name" value="Radical_SAM"/>
    <property type="match status" value="1"/>
</dbReference>
<dbReference type="Pfam" id="PF01938">
    <property type="entry name" value="TRAM"/>
    <property type="match status" value="1"/>
</dbReference>
<dbReference type="Pfam" id="PF00919">
    <property type="entry name" value="UPF0004"/>
    <property type="match status" value="1"/>
</dbReference>
<dbReference type="SFLD" id="SFLDF00273">
    <property type="entry name" value="(dimethylallyl)adenosine_tRNA"/>
    <property type="match status" value="1"/>
</dbReference>
<dbReference type="SFLD" id="SFLDG01082">
    <property type="entry name" value="B12-binding_domain_containing"/>
    <property type="match status" value="1"/>
</dbReference>
<dbReference type="SFLD" id="SFLDF00413">
    <property type="entry name" value="CDK5RAP1"/>
    <property type="match status" value="1"/>
</dbReference>
<dbReference type="SFLD" id="SFLDS00029">
    <property type="entry name" value="Radical_SAM"/>
    <property type="match status" value="1"/>
</dbReference>
<dbReference type="SMART" id="SM00729">
    <property type="entry name" value="Elp3"/>
    <property type="match status" value="1"/>
</dbReference>
<dbReference type="SUPFAM" id="SSF102114">
    <property type="entry name" value="Radical SAM enzymes"/>
    <property type="match status" value="1"/>
</dbReference>
<dbReference type="PROSITE" id="PS51449">
    <property type="entry name" value="MTTASE_N"/>
    <property type="match status" value="1"/>
</dbReference>
<dbReference type="PROSITE" id="PS01278">
    <property type="entry name" value="MTTASE_RADICAL"/>
    <property type="match status" value="1"/>
</dbReference>
<dbReference type="PROSITE" id="PS51918">
    <property type="entry name" value="RADICAL_SAM"/>
    <property type="match status" value="1"/>
</dbReference>
<dbReference type="PROSITE" id="PS50926">
    <property type="entry name" value="TRAM"/>
    <property type="match status" value="1"/>
</dbReference>
<keyword id="KW-0004">4Fe-4S</keyword>
<keyword id="KW-0963">Cytoplasm</keyword>
<keyword id="KW-0408">Iron</keyword>
<keyword id="KW-0411">Iron-sulfur</keyword>
<keyword id="KW-0479">Metal-binding</keyword>
<keyword id="KW-0949">S-adenosyl-L-methionine</keyword>
<keyword id="KW-0808">Transferase</keyword>
<keyword id="KW-0819">tRNA processing</keyword>
<gene>
    <name evidence="1" type="primary">miaB</name>
    <name type="ordered locus">BF0028</name>
</gene>
<reference key="1">
    <citation type="journal article" date="2004" name="Proc. Natl. Acad. Sci. U.S.A.">
        <title>Genomic analysis of Bacteroides fragilis reveals extensive DNA inversions regulating cell surface adaptation.</title>
        <authorList>
            <person name="Kuwahara T."/>
            <person name="Yamashita A."/>
            <person name="Hirakawa H."/>
            <person name="Nakayama H."/>
            <person name="Toh H."/>
            <person name="Okada N."/>
            <person name="Kuhara S."/>
            <person name="Hattori M."/>
            <person name="Hayashi T."/>
            <person name="Ohnishi Y."/>
        </authorList>
    </citation>
    <scope>NUCLEOTIDE SEQUENCE [LARGE SCALE GENOMIC DNA]</scope>
    <source>
        <strain>YCH46</strain>
    </source>
</reference>
<protein>
    <recommendedName>
        <fullName evidence="1">tRNA-2-methylthio-N(6)-dimethylallyladenosine synthase</fullName>
        <ecNumber evidence="1">2.8.4.3</ecNumber>
    </recommendedName>
    <alternativeName>
        <fullName evidence="1">(Dimethylallyl)adenosine tRNA methylthiotransferase MiaB</fullName>
    </alternativeName>
    <alternativeName>
        <fullName evidence="1">tRNA-i(6)A37 methylthiotransferase</fullName>
    </alternativeName>
</protein>
<comment type="function">
    <text evidence="1">Catalyzes the methylthiolation of N6-(dimethylallyl)adenosine (i(6)A), leading to the formation of 2-methylthio-N6-(dimethylallyl)adenosine (ms(2)i(6)A) at position 37 in tRNAs that read codons beginning with uridine.</text>
</comment>
<comment type="catalytic activity">
    <reaction evidence="1">
        <text>N(6)-dimethylallyladenosine(37) in tRNA + (sulfur carrier)-SH + AH2 + 2 S-adenosyl-L-methionine = 2-methylsulfanyl-N(6)-dimethylallyladenosine(37) in tRNA + (sulfur carrier)-H + 5'-deoxyadenosine + L-methionine + A + S-adenosyl-L-homocysteine + 2 H(+)</text>
        <dbReference type="Rhea" id="RHEA:37067"/>
        <dbReference type="Rhea" id="RHEA-COMP:10375"/>
        <dbReference type="Rhea" id="RHEA-COMP:10376"/>
        <dbReference type="Rhea" id="RHEA-COMP:14737"/>
        <dbReference type="Rhea" id="RHEA-COMP:14739"/>
        <dbReference type="ChEBI" id="CHEBI:13193"/>
        <dbReference type="ChEBI" id="CHEBI:15378"/>
        <dbReference type="ChEBI" id="CHEBI:17319"/>
        <dbReference type="ChEBI" id="CHEBI:17499"/>
        <dbReference type="ChEBI" id="CHEBI:29917"/>
        <dbReference type="ChEBI" id="CHEBI:57844"/>
        <dbReference type="ChEBI" id="CHEBI:57856"/>
        <dbReference type="ChEBI" id="CHEBI:59789"/>
        <dbReference type="ChEBI" id="CHEBI:64428"/>
        <dbReference type="ChEBI" id="CHEBI:74415"/>
        <dbReference type="ChEBI" id="CHEBI:74417"/>
        <dbReference type="EC" id="2.8.4.3"/>
    </reaction>
</comment>
<comment type="cofactor">
    <cofactor evidence="1">
        <name>[4Fe-4S] cluster</name>
        <dbReference type="ChEBI" id="CHEBI:49883"/>
    </cofactor>
    <text evidence="1">Binds 2 [4Fe-4S] clusters. One cluster is coordinated with 3 cysteines and an exchangeable S-adenosyl-L-methionine.</text>
</comment>
<comment type="subunit">
    <text evidence="1">Monomer.</text>
</comment>
<comment type="subcellular location">
    <subcellularLocation>
        <location evidence="1">Cytoplasm</location>
    </subcellularLocation>
</comment>
<comment type="similarity">
    <text evidence="1">Belongs to the methylthiotransferase family. MiaB subfamily.</text>
</comment>
<name>MIAB_BACFR</name>
<feature type="chain" id="PRO_0000374140" description="tRNA-2-methylthio-N(6)-dimethylallyladenosine synthase">
    <location>
        <begin position="1"/>
        <end position="457"/>
    </location>
</feature>
<feature type="domain" description="MTTase N-terminal" evidence="1">
    <location>
        <begin position="18"/>
        <end position="133"/>
    </location>
</feature>
<feature type="domain" description="Radical SAM core" evidence="2">
    <location>
        <begin position="157"/>
        <end position="390"/>
    </location>
</feature>
<feature type="domain" description="TRAM" evidence="1">
    <location>
        <begin position="393"/>
        <end position="456"/>
    </location>
</feature>
<feature type="binding site" evidence="1">
    <location>
        <position position="27"/>
    </location>
    <ligand>
        <name>[4Fe-4S] cluster</name>
        <dbReference type="ChEBI" id="CHEBI:49883"/>
        <label>1</label>
    </ligand>
</feature>
<feature type="binding site" evidence="1">
    <location>
        <position position="63"/>
    </location>
    <ligand>
        <name>[4Fe-4S] cluster</name>
        <dbReference type="ChEBI" id="CHEBI:49883"/>
        <label>1</label>
    </ligand>
</feature>
<feature type="binding site" evidence="1">
    <location>
        <position position="97"/>
    </location>
    <ligand>
        <name>[4Fe-4S] cluster</name>
        <dbReference type="ChEBI" id="CHEBI:49883"/>
        <label>1</label>
    </ligand>
</feature>
<feature type="binding site" evidence="1">
    <location>
        <position position="171"/>
    </location>
    <ligand>
        <name>[4Fe-4S] cluster</name>
        <dbReference type="ChEBI" id="CHEBI:49883"/>
        <label>2</label>
        <note>4Fe-4S-S-AdoMet</note>
    </ligand>
</feature>
<feature type="binding site" evidence="1">
    <location>
        <position position="175"/>
    </location>
    <ligand>
        <name>[4Fe-4S] cluster</name>
        <dbReference type="ChEBI" id="CHEBI:49883"/>
        <label>2</label>
        <note>4Fe-4S-S-AdoMet</note>
    </ligand>
</feature>
<feature type="binding site" evidence="1">
    <location>
        <position position="178"/>
    </location>
    <ligand>
        <name>[4Fe-4S] cluster</name>
        <dbReference type="ChEBI" id="CHEBI:49883"/>
        <label>2</label>
        <note>4Fe-4S-S-AdoMet</note>
    </ligand>
</feature>
<organism>
    <name type="scientific">Bacteroides fragilis (strain YCH46)</name>
    <dbReference type="NCBI Taxonomy" id="295405"/>
    <lineage>
        <taxon>Bacteria</taxon>
        <taxon>Pseudomonadati</taxon>
        <taxon>Bacteroidota</taxon>
        <taxon>Bacteroidia</taxon>
        <taxon>Bacteroidales</taxon>
        <taxon>Bacteroidaceae</taxon>
        <taxon>Bacteroides</taxon>
    </lineage>
</organism>
<proteinExistence type="inferred from homology"/>
<sequence>MNELTGADFKSATADDNKKLFIETYGCQMNVADSEVIASVMQMAGYSVAETLEEADAVFMNTCSIRDNAEQKILNRLEFFHSMKKKKKHLIVGVLGCMAERVKDDLIEHHHVDLVVGPDAYLTLPELIASVEAGEKAMNVELSTTETYRDVIPSRICGNHISGFVSIMRGCNNFCTYCIVPYTRGRERSRDVESILNEVADLVSKGYKEITLLGQNVNSYRFEKEGGEVVTFPMLLRLVAEAAPGIRVRFTTSHPKDMSDETLEVIAQVPNVCKHIHLPVQSGSSRILKLMNRKYTREWYLDRVAAIKRIVPDCGLTTDIFSGFHSETEEDHRESLSLMEACGYDAAFMFKYSERPGTYASKHLEDNVPEEIKVRRLNEIIALQNRLSAESNNRCIGKTYEVLVEGVSKRSRDQLFGRTEQNRVVVFDRGTHRIGDFVNVRITEASSATLKGEEVFS</sequence>
<evidence type="ECO:0000255" key="1">
    <source>
        <dbReference type="HAMAP-Rule" id="MF_01864"/>
    </source>
</evidence>
<evidence type="ECO:0000255" key="2">
    <source>
        <dbReference type="PROSITE-ProRule" id="PRU01266"/>
    </source>
</evidence>